<evidence type="ECO:0000255" key="1">
    <source>
        <dbReference type="HAMAP-Rule" id="MF_01707"/>
    </source>
</evidence>
<evidence type="ECO:0000305" key="2"/>
<dbReference type="EC" id="7.6.2.5" evidence="1"/>
<dbReference type="EMBL" id="CP000133">
    <property type="protein sequence ID" value="ABC92690.1"/>
    <property type="status" value="ALT_INIT"/>
    <property type="molecule type" value="Genomic_DNA"/>
</dbReference>
<dbReference type="RefSeq" id="WP_011427136.1">
    <property type="nucleotide sequence ID" value="NC_007761.1"/>
</dbReference>
<dbReference type="SMR" id="Q2K396"/>
<dbReference type="KEGG" id="ret:RHE_CH03945"/>
<dbReference type="eggNOG" id="COG4133">
    <property type="taxonomic scope" value="Bacteria"/>
</dbReference>
<dbReference type="HOGENOM" id="CLU_000604_1_2_5"/>
<dbReference type="OrthoDB" id="9800654at2"/>
<dbReference type="Proteomes" id="UP000001936">
    <property type="component" value="Chromosome"/>
</dbReference>
<dbReference type="GO" id="GO:0005886">
    <property type="term" value="C:plasma membrane"/>
    <property type="evidence" value="ECO:0007669"/>
    <property type="project" value="UniProtKB-SubCell"/>
</dbReference>
<dbReference type="GO" id="GO:0015439">
    <property type="term" value="F:ABC-type heme transporter activity"/>
    <property type="evidence" value="ECO:0007669"/>
    <property type="project" value="UniProtKB-EC"/>
</dbReference>
<dbReference type="GO" id="GO:0005524">
    <property type="term" value="F:ATP binding"/>
    <property type="evidence" value="ECO:0007669"/>
    <property type="project" value="UniProtKB-KW"/>
</dbReference>
<dbReference type="GO" id="GO:0016887">
    <property type="term" value="F:ATP hydrolysis activity"/>
    <property type="evidence" value="ECO:0007669"/>
    <property type="project" value="InterPro"/>
</dbReference>
<dbReference type="GO" id="GO:0017004">
    <property type="term" value="P:cytochrome complex assembly"/>
    <property type="evidence" value="ECO:0007669"/>
    <property type="project" value="UniProtKB-KW"/>
</dbReference>
<dbReference type="Gene3D" id="3.40.50.300">
    <property type="entry name" value="P-loop containing nucleotide triphosphate hydrolases"/>
    <property type="match status" value="1"/>
</dbReference>
<dbReference type="InterPro" id="IPR003593">
    <property type="entry name" value="AAA+_ATPase"/>
</dbReference>
<dbReference type="InterPro" id="IPR003439">
    <property type="entry name" value="ABC_transporter-like_ATP-bd"/>
</dbReference>
<dbReference type="InterPro" id="IPR017871">
    <property type="entry name" value="ABC_transporter-like_CS"/>
</dbReference>
<dbReference type="InterPro" id="IPR005895">
    <property type="entry name" value="ABC_transptr_haem_export_CcmA"/>
</dbReference>
<dbReference type="InterPro" id="IPR027417">
    <property type="entry name" value="P-loop_NTPase"/>
</dbReference>
<dbReference type="NCBIfam" id="TIGR01189">
    <property type="entry name" value="ccmA"/>
    <property type="match status" value="1"/>
</dbReference>
<dbReference type="PANTHER" id="PTHR43499">
    <property type="entry name" value="ABC TRANSPORTER I FAMILY MEMBER 1"/>
    <property type="match status" value="1"/>
</dbReference>
<dbReference type="PANTHER" id="PTHR43499:SF1">
    <property type="entry name" value="ABC TRANSPORTER I FAMILY MEMBER 1"/>
    <property type="match status" value="1"/>
</dbReference>
<dbReference type="Pfam" id="PF00005">
    <property type="entry name" value="ABC_tran"/>
    <property type="match status" value="1"/>
</dbReference>
<dbReference type="SMART" id="SM00382">
    <property type="entry name" value="AAA"/>
    <property type="match status" value="1"/>
</dbReference>
<dbReference type="SUPFAM" id="SSF52540">
    <property type="entry name" value="P-loop containing nucleoside triphosphate hydrolases"/>
    <property type="match status" value="1"/>
</dbReference>
<dbReference type="PROSITE" id="PS00211">
    <property type="entry name" value="ABC_TRANSPORTER_1"/>
    <property type="match status" value="1"/>
</dbReference>
<dbReference type="PROSITE" id="PS50893">
    <property type="entry name" value="ABC_TRANSPORTER_2"/>
    <property type="match status" value="1"/>
</dbReference>
<dbReference type="PROSITE" id="PS51243">
    <property type="entry name" value="CCMA"/>
    <property type="match status" value="1"/>
</dbReference>
<gene>
    <name evidence="1" type="primary">ccmA</name>
    <name type="ordered locus">RHE_CH03945</name>
</gene>
<reference key="1">
    <citation type="journal article" date="2006" name="Proc. Natl. Acad. Sci. U.S.A.">
        <title>The partitioned Rhizobium etli genome: genetic and metabolic redundancy in seven interacting replicons.</title>
        <authorList>
            <person name="Gonzalez V."/>
            <person name="Santamaria R.I."/>
            <person name="Bustos P."/>
            <person name="Hernandez-Gonzalez I."/>
            <person name="Medrano-Soto A."/>
            <person name="Moreno-Hagelsieb G."/>
            <person name="Janga S.C."/>
            <person name="Ramirez M.A."/>
            <person name="Jimenez-Jacinto V."/>
            <person name="Collado-Vides J."/>
            <person name="Davila G."/>
        </authorList>
    </citation>
    <scope>NUCLEOTIDE SEQUENCE [LARGE SCALE GENOMIC DNA]</scope>
    <source>
        <strain>ATCC 51251 / DSM 11541 / JCM 21823 / NBRC 15573 / CFN 42</strain>
    </source>
</reference>
<keyword id="KW-0067">ATP-binding</keyword>
<keyword id="KW-0997">Cell inner membrane</keyword>
<keyword id="KW-1003">Cell membrane</keyword>
<keyword id="KW-0201">Cytochrome c-type biogenesis</keyword>
<keyword id="KW-0472">Membrane</keyword>
<keyword id="KW-0547">Nucleotide-binding</keyword>
<keyword id="KW-1185">Reference proteome</keyword>
<keyword id="KW-1278">Translocase</keyword>
<keyword id="KW-0813">Transport</keyword>
<organism>
    <name type="scientific">Rhizobium etli (strain ATCC 51251 / DSM 11541 / JCM 21823 / NBRC 15573 / CFN 42)</name>
    <dbReference type="NCBI Taxonomy" id="347834"/>
    <lineage>
        <taxon>Bacteria</taxon>
        <taxon>Pseudomonadati</taxon>
        <taxon>Pseudomonadota</taxon>
        <taxon>Alphaproteobacteria</taxon>
        <taxon>Hyphomicrobiales</taxon>
        <taxon>Rhizobiaceae</taxon>
        <taxon>Rhizobium/Agrobacterium group</taxon>
        <taxon>Rhizobium</taxon>
    </lineage>
</organism>
<name>CCMA_RHIEC</name>
<accession>Q2K396</accession>
<comment type="function">
    <text evidence="1">Part of the ABC transporter complex CcmAB involved in the biogenesis of c-type cytochromes; once thought to export heme, this seems not to be the case, but its exact role is uncertain. Responsible for energy coupling to the transport system.</text>
</comment>
<comment type="catalytic activity">
    <reaction evidence="1">
        <text>heme b(in) + ATP + H2O = heme b(out) + ADP + phosphate + H(+)</text>
        <dbReference type="Rhea" id="RHEA:19261"/>
        <dbReference type="ChEBI" id="CHEBI:15377"/>
        <dbReference type="ChEBI" id="CHEBI:15378"/>
        <dbReference type="ChEBI" id="CHEBI:30616"/>
        <dbReference type="ChEBI" id="CHEBI:43474"/>
        <dbReference type="ChEBI" id="CHEBI:60344"/>
        <dbReference type="ChEBI" id="CHEBI:456216"/>
        <dbReference type="EC" id="7.6.2.5"/>
    </reaction>
</comment>
<comment type="subunit">
    <text evidence="1">The complex is composed of two ATP-binding proteins (CcmA) and two transmembrane proteins (CcmB).</text>
</comment>
<comment type="subcellular location">
    <subcellularLocation>
        <location evidence="1">Cell inner membrane</location>
        <topology evidence="1">Peripheral membrane protein</topology>
    </subcellularLocation>
</comment>
<comment type="similarity">
    <text evidence="1">Belongs to the ABC transporter superfamily. CcmA exporter (TC 3.A.1.107) family.</text>
</comment>
<comment type="sequence caution" evidence="2">
    <conflict type="erroneous initiation">
        <sequence resource="EMBL-CDS" id="ABC92690"/>
    </conflict>
</comment>
<feature type="chain" id="PRO_0000271946" description="Cytochrome c biogenesis ATP-binding export protein CcmA">
    <location>
        <begin position="1"/>
        <end position="215"/>
    </location>
</feature>
<feature type="domain" description="ABC transporter" evidence="1">
    <location>
        <begin position="3"/>
        <end position="211"/>
    </location>
</feature>
<feature type="binding site" evidence="1">
    <location>
        <begin position="35"/>
        <end position="42"/>
    </location>
    <ligand>
        <name>ATP</name>
        <dbReference type="ChEBI" id="CHEBI:30616"/>
    </ligand>
</feature>
<proteinExistence type="inferred from homology"/>
<sequence>MHLTAENLAARRGEDMIFINISFYLAAGEALVLTGRNGSGKSTLLRVVAGLLKPEKGTVIFGDKESPEGQHPGEVSHYLGHRNAMKNELTVAENLDFWRHFLRSTCSSADLSVEDATEAVGLSGISHLPFGYLSAGQQRRFAFAKLLVAHRPVWILDEPTAALDASADRLFAGLIEAHLAKGGIVLAATHQPLGLKNAQELKMTGFAGVDRGVWG</sequence>
<protein>
    <recommendedName>
        <fullName evidence="1">Cytochrome c biogenesis ATP-binding export protein CcmA</fullName>
        <ecNumber evidence="1">7.6.2.5</ecNumber>
    </recommendedName>
    <alternativeName>
        <fullName evidence="1">Heme exporter protein A</fullName>
    </alternativeName>
</protein>